<gene>
    <name type="primary">NTN5</name>
</gene>
<protein>
    <recommendedName>
        <fullName>Netrin-5</fullName>
    </recommendedName>
    <alternativeName>
        <fullName>Netrin-1-like protein</fullName>
    </alternativeName>
</protein>
<evidence type="ECO:0000250" key="1"/>
<evidence type="ECO:0000250" key="2">
    <source>
        <dbReference type="UniProtKB" id="Q3UQ22"/>
    </source>
</evidence>
<evidence type="ECO:0000255" key="3"/>
<evidence type="ECO:0000255" key="4">
    <source>
        <dbReference type="PROSITE-ProRule" id="PRU00295"/>
    </source>
</evidence>
<evidence type="ECO:0000255" key="5">
    <source>
        <dbReference type="PROSITE-ProRule" id="PRU00460"/>
    </source>
</evidence>
<evidence type="ECO:0000256" key="6">
    <source>
        <dbReference type="SAM" id="MobiDB-lite"/>
    </source>
</evidence>
<evidence type="ECO:0000303" key="7">
    <source>
    </source>
</evidence>
<organism>
    <name type="scientific">Homo sapiens</name>
    <name type="common">Human</name>
    <dbReference type="NCBI Taxonomy" id="9606"/>
    <lineage>
        <taxon>Eukaryota</taxon>
        <taxon>Metazoa</taxon>
        <taxon>Chordata</taxon>
        <taxon>Craniata</taxon>
        <taxon>Vertebrata</taxon>
        <taxon>Euteleostomi</taxon>
        <taxon>Mammalia</taxon>
        <taxon>Eutheria</taxon>
        <taxon>Euarchontoglires</taxon>
        <taxon>Primates</taxon>
        <taxon>Haplorrhini</taxon>
        <taxon>Catarrhini</taxon>
        <taxon>Hominidae</taxon>
        <taxon>Homo</taxon>
    </lineage>
</organism>
<dbReference type="EMBL" id="CH471177">
    <property type="protein sequence ID" value="EAW52386.1"/>
    <property type="molecule type" value="Genomic_DNA"/>
</dbReference>
<dbReference type="EMBL" id="CH471177">
    <property type="protein sequence ID" value="EAW52387.1"/>
    <property type="molecule type" value="Genomic_DNA"/>
</dbReference>
<dbReference type="EMBL" id="BC018654">
    <property type="protein sequence ID" value="AAH18654.2"/>
    <property type="molecule type" value="mRNA"/>
</dbReference>
<dbReference type="EMBL" id="BC018697">
    <property type="protein sequence ID" value="AAH18697.2"/>
    <property type="molecule type" value="mRNA"/>
</dbReference>
<dbReference type="EMBL" id="BC021210">
    <property type="protein sequence ID" value="AAH21210.2"/>
    <property type="molecule type" value="mRNA"/>
</dbReference>
<dbReference type="EMBL" id="BC033207">
    <property type="protein sequence ID" value="AAH33207.1"/>
    <property type="molecule type" value="mRNA"/>
</dbReference>
<dbReference type="CCDS" id="CCDS33068.1">
    <molecule id="Q8WTR8-1"/>
</dbReference>
<dbReference type="RefSeq" id="NP_665806.1">
    <molecule id="Q8WTR8-1"/>
    <property type="nucleotide sequence ID" value="NM_145807.4"/>
</dbReference>
<dbReference type="SMR" id="Q8WTR8"/>
<dbReference type="BioGRID" id="125960">
    <property type="interactions" value="23"/>
</dbReference>
<dbReference type="IntAct" id="Q8WTR8">
    <property type="interactions" value="22"/>
</dbReference>
<dbReference type="STRING" id="9606.ENSP00000270235"/>
<dbReference type="GlyCosmos" id="Q8WTR8">
    <property type="glycosylation" value="1 site, No reported glycans"/>
</dbReference>
<dbReference type="GlyGen" id="Q8WTR8">
    <property type="glycosylation" value="2 sites"/>
</dbReference>
<dbReference type="PhosphoSitePlus" id="Q8WTR8"/>
<dbReference type="BioMuta" id="NTN5"/>
<dbReference type="DMDM" id="74730628"/>
<dbReference type="MassIVE" id="Q8WTR8"/>
<dbReference type="PaxDb" id="9606-ENSP00000270235"/>
<dbReference type="PeptideAtlas" id="Q8WTR8"/>
<dbReference type="ProteomicsDB" id="74592">
    <molecule id="Q8WTR8-1"/>
</dbReference>
<dbReference type="ProteomicsDB" id="74593">
    <molecule id="Q8WTR8-2"/>
</dbReference>
<dbReference type="Antibodypedia" id="31764">
    <property type="antibodies" value="47 antibodies from 14 providers"/>
</dbReference>
<dbReference type="DNASU" id="126147"/>
<dbReference type="Ensembl" id="ENST00000270235.11">
    <molecule id="Q8WTR8-1"/>
    <property type="protein sequence ID" value="ENSP00000270235.4"/>
    <property type="gene ID" value="ENSG00000142233.14"/>
</dbReference>
<dbReference type="GeneID" id="126147"/>
<dbReference type="KEGG" id="hsa:126147"/>
<dbReference type="MANE-Select" id="ENST00000270235.11">
    <property type="protein sequence ID" value="ENSP00000270235.4"/>
    <property type="RefSeq nucleotide sequence ID" value="NM_145807.4"/>
    <property type="RefSeq protein sequence ID" value="NP_665806.1"/>
</dbReference>
<dbReference type="UCSC" id="uc002pkb.3">
    <molecule id="Q8WTR8-1"/>
    <property type="organism name" value="human"/>
</dbReference>
<dbReference type="AGR" id="HGNC:25208"/>
<dbReference type="CTD" id="126147"/>
<dbReference type="DisGeNET" id="126147"/>
<dbReference type="GeneCards" id="NTN5"/>
<dbReference type="HGNC" id="HGNC:25208">
    <property type="gene designation" value="NTN5"/>
</dbReference>
<dbReference type="HPA" id="ENSG00000142233">
    <property type="expression patterns" value="Tissue enhanced (pituitary)"/>
</dbReference>
<dbReference type="neXtProt" id="NX_Q8WTR8"/>
<dbReference type="OpenTargets" id="ENSG00000142233"/>
<dbReference type="PharmGKB" id="PA164724232"/>
<dbReference type="VEuPathDB" id="HostDB:ENSG00000142233"/>
<dbReference type="eggNOG" id="KOG3512">
    <property type="taxonomic scope" value="Eukaryota"/>
</dbReference>
<dbReference type="GeneTree" id="ENSGT00940000161874"/>
<dbReference type="HOGENOM" id="CLU_018213_0_0_1"/>
<dbReference type="InParanoid" id="Q8WTR8"/>
<dbReference type="OMA" id="DPCYDPQ"/>
<dbReference type="OrthoDB" id="5984158at2759"/>
<dbReference type="PAN-GO" id="Q8WTR8">
    <property type="GO annotations" value="6 GO annotations based on evolutionary models"/>
</dbReference>
<dbReference type="PhylomeDB" id="Q8WTR8"/>
<dbReference type="TreeFam" id="TF352481"/>
<dbReference type="PathwayCommons" id="Q8WTR8"/>
<dbReference type="SignaLink" id="Q8WTR8"/>
<dbReference type="BioGRID-ORCS" id="126147">
    <property type="hits" value="16 hits in 1143 CRISPR screens"/>
</dbReference>
<dbReference type="GenomeRNAi" id="126147"/>
<dbReference type="Pharos" id="Q8WTR8">
    <property type="development level" value="Tdark"/>
</dbReference>
<dbReference type="PRO" id="PR:Q8WTR8"/>
<dbReference type="Proteomes" id="UP000005640">
    <property type="component" value="Chromosome 19"/>
</dbReference>
<dbReference type="RNAct" id="Q8WTR8">
    <property type="molecule type" value="protein"/>
</dbReference>
<dbReference type="Bgee" id="ENSG00000142233">
    <property type="expression patterns" value="Expressed in right uterine tube and 93 other cell types or tissues"/>
</dbReference>
<dbReference type="ExpressionAtlas" id="Q8WTR8">
    <property type="expression patterns" value="baseline and differential"/>
</dbReference>
<dbReference type="GO" id="GO:0005576">
    <property type="term" value="C:extracellular region"/>
    <property type="evidence" value="ECO:0007669"/>
    <property type="project" value="UniProtKB-SubCell"/>
</dbReference>
<dbReference type="GO" id="GO:0022008">
    <property type="term" value="P:neurogenesis"/>
    <property type="evidence" value="ECO:0000250"/>
    <property type="project" value="UniProtKB"/>
</dbReference>
<dbReference type="CDD" id="cd00055">
    <property type="entry name" value="EGF_Lam"/>
    <property type="match status" value="2"/>
</dbReference>
<dbReference type="CDD" id="cd03579">
    <property type="entry name" value="NTR_netrin-1_like"/>
    <property type="match status" value="1"/>
</dbReference>
<dbReference type="FunFam" id="2.10.25.10:FF:000081">
    <property type="entry name" value="Netrin 1"/>
    <property type="match status" value="1"/>
</dbReference>
<dbReference type="FunFam" id="2.10.25.10:FF:000048">
    <property type="entry name" value="Netrin 3"/>
    <property type="match status" value="1"/>
</dbReference>
<dbReference type="FunFam" id="2.40.50.120:FF:000020">
    <property type="entry name" value="Netrin 5"/>
    <property type="match status" value="1"/>
</dbReference>
<dbReference type="Gene3D" id="2.40.50.120">
    <property type="match status" value="1"/>
</dbReference>
<dbReference type="Gene3D" id="2.10.25.10">
    <property type="entry name" value="Laminin"/>
    <property type="match status" value="1"/>
</dbReference>
<dbReference type="Gene3D" id="2.170.300.10">
    <property type="entry name" value="Tie2 ligand-binding domain superfamily"/>
    <property type="match status" value="1"/>
</dbReference>
<dbReference type="InterPro" id="IPR050440">
    <property type="entry name" value="Laminin/Netrin_ECM"/>
</dbReference>
<dbReference type="InterPro" id="IPR002049">
    <property type="entry name" value="LE_dom"/>
</dbReference>
<dbReference type="InterPro" id="IPR056863">
    <property type="entry name" value="LMN_ATRN_NET-like_EGF"/>
</dbReference>
<dbReference type="InterPro" id="IPR001134">
    <property type="entry name" value="Netrin_domain"/>
</dbReference>
<dbReference type="InterPro" id="IPR018933">
    <property type="entry name" value="Netrin_module_non-TIMP"/>
</dbReference>
<dbReference type="InterPro" id="IPR008993">
    <property type="entry name" value="TIMP-like_OB-fold"/>
</dbReference>
<dbReference type="PANTHER" id="PTHR10574:SF262">
    <property type="entry name" value="NETRIN-5"/>
    <property type="match status" value="1"/>
</dbReference>
<dbReference type="PANTHER" id="PTHR10574">
    <property type="entry name" value="NETRIN/LAMININ-RELATED"/>
    <property type="match status" value="1"/>
</dbReference>
<dbReference type="Pfam" id="PF00053">
    <property type="entry name" value="EGF_laminin"/>
    <property type="match status" value="2"/>
</dbReference>
<dbReference type="Pfam" id="PF24973">
    <property type="entry name" value="EGF_LMN_ATRN"/>
    <property type="match status" value="1"/>
</dbReference>
<dbReference type="Pfam" id="PF01759">
    <property type="entry name" value="NTR"/>
    <property type="match status" value="1"/>
</dbReference>
<dbReference type="SMART" id="SM00643">
    <property type="entry name" value="C345C"/>
    <property type="match status" value="1"/>
</dbReference>
<dbReference type="SMART" id="SM00180">
    <property type="entry name" value="EGF_Lam"/>
    <property type="match status" value="3"/>
</dbReference>
<dbReference type="SUPFAM" id="SSF57196">
    <property type="entry name" value="EGF/Laminin"/>
    <property type="match status" value="3"/>
</dbReference>
<dbReference type="SUPFAM" id="SSF50242">
    <property type="entry name" value="TIMP-like"/>
    <property type="match status" value="1"/>
</dbReference>
<dbReference type="PROSITE" id="PS00022">
    <property type="entry name" value="EGF_1"/>
    <property type="match status" value="2"/>
</dbReference>
<dbReference type="PROSITE" id="PS01248">
    <property type="entry name" value="EGF_LAM_1"/>
    <property type="match status" value="2"/>
</dbReference>
<dbReference type="PROSITE" id="PS50027">
    <property type="entry name" value="EGF_LAM_2"/>
    <property type="match status" value="3"/>
</dbReference>
<dbReference type="PROSITE" id="PS50189">
    <property type="entry name" value="NTR"/>
    <property type="match status" value="1"/>
</dbReference>
<feature type="signal peptide" evidence="3">
    <location>
        <begin position="1"/>
        <end position="16"/>
    </location>
</feature>
<feature type="chain" id="PRO_0000320575" description="Netrin-5">
    <location>
        <begin position="17"/>
        <end position="489"/>
    </location>
</feature>
<feature type="domain" description="Laminin EGF-like 1" evidence="5">
    <location>
        <begin position="157"/>
        <end position="211"/>
    </location>
</feature>
<feature type="domain" description="Laminin EGF-like 2" evidence="5">
    <location>
        <begin position="212"/>
        <end position="274"/>
    </location>
</feature>
<feature type="domain" description="Laminin EGF-like 3" evidence="5">
    <location>
        <begin position="275"/>
        <end position="324"/>
    </location>
</feature>
<feature type="domain" description="NTR" evidence="4">
    <location>
        <begin position="345"/>
        <end position="475"/>
    </location>
</feature>
<feature type="region of interest" description="Disordered" evidence="6">
    <location>
        <begin position="470"/>
        <end position="489"/>
    </location>
</feature>
<feature type="glycosylation site" description="N-linked (GlcNAc...) asparagine" evidence="3">
    <location>
        <position position="62"/>
    </location>
</feature>
<feature type="disulfide bond" evidence="1">
    <location>
        <begin position="157"/>
        <end position="166"/>
    </location>
</feature>
<feature type="disulfide bond" evidence="1">
    <location>
        <begin position="159"/>
        <end position="175"/>
    </location>
</feature>
<feature type="disulfide bond" evidence="1">
    <location>
        <begin position="177"/>
        <end position="186"/>
    </location>
</feature>
<feature type="disulfide bond" evidence="1">
    <location>
        <begin position="189"/>
        <end position="209"/>
    </location>
</feature>
<feature type="disulfide bond" evidence="1">
    <location>
        <begin position="212"/>
        <end position="221"/>
    </location>
</feature>
<feature type="disulfide bond" evidence="1">
    <location>
        <begin position="214"/>
        <end position="239"/>
    </location>
</feature>
<feature type="disulfide bond" evidence="1">
    <location>
        <begin position="242"/>
        <end position="251"/>
    </location>
</feature>
<feature type="disulfide bond" evidence="1">
    <location>
        <begin position="254"/>
        <end position="272"/>
    </location>
</feature>
<feature type="disulfide bond" evidence="1">
    <location>
        <begin position="275"/>
        <end position="287"/>
    </location>
</feature>
<feature type="disulfide bond" evidence="1">
    <location>
        <begin position="277"/>
        <end position="294"/>
    </location>
</feature>
<feature type="disulfide bond" evidence="1">
    <location>
        <begin position="296"/>
        <end position="305"/>
    </location>
</feature>
<feature type="disulfide bond" evidence="1">
    <location>
        <begin position="308"/>
        <end position="322"/>
    </location>
</feature>
<feature type="disulfide bond" evidence="1">
    <location>
        <begin position="345"/>
        <end position="418"/>
    </location>
</feature>
<feature type="disulfide bond" evidence="1">
    <location>
        <begin position="349"/>
        <end position="420"/>
    </location>
</feature>
<feature type="disulfide bond" evidence="1">
    <location>
        <begin position="364"/>
        <end position="475"/>
    </location>
</feature>
<feature type="splice variant" id="VSP_031667" description="In isoform 2." evidence="7">
    <original>DPQCQNYCN</original>
    <variation>GKTVWHGGP</variation>
    <location>
        <begin position="342"/>
        <end position="350"/>
    </location>
</feature>
<feature type="splice variant" id="VSP_031668" description="In isoform 2." evidence="7">
    <location>
        <begin position="351"/>
        <end position="489"/>
    </location>
</feature>
<name>NET5_HUMAN</name>
<accession>Q8WTR8</accession>
<accession>Q8N4X9</accession>
<accession>Q8WU63</accession>
<proteinExistence type="evidence at protein level"/>
<reference key="1">
    <citation type="submission" date="2005-07" db="EMBL/GenBank/DDBJ databases">
        <authorList>
            <person name="Mural R.J."/>
            <person name="Istrail S."/>
            <person name="Sutton G.G."/>
            <person name="Florea L."/>
            <person name="Halpern A.L."/>
            <person name="Mobarry C.M."/>
            <person name="Lippert R."/>
            <person name="Walenz B."/>
            <person name="Shatkay H."/>
            <person name="Dew I."/>
            <person name="Miller J.R."/>
            <person name="Flanigan M.J."/>
            <person name="Edwards N.J."/>
            <person name="Bolanos R."/>
            <person name="Fasulo D."/>
            <person name="Halldorsson B.V."/>
            <person name="Hannenhalli S."/>
            <person name="Turner R."/>
            <person name="Yooseph S."/>
            <person name="Lu F."/>
            <person name="Nusskern D.R."/>
            <person name="Shue B.C."/>
            <person name="Zheng X.H."/>
            <person name="Zhong F."/>
            <person name="Delcher A.L."/>
            <person name="Huson D.H."/>
            <person name="Kravitz S.A."/>
            <person name="Mouchard L."/>
            <person name="Reinert K."/>
            <person name="Remington K.A."/>
            <person name="Clark A.G."/>
            <person name="Waterman M.S."/>
            <person name="Eichler E.E."/>
            <person name="Adams M.D."/>
            <person name="Hunkapiller M.W."/>
            <person name="Myers E.W."/>
            <person name="Venter J.C."/>
        </authorList>
    </citation>
    <scope>NUCLEOTIDE SEQUENCE [LARGE SCALE GENOMIC DNA]</scope>
</reference>
<reference key="2">
    <citation type="journal article" date="2004" name="Genome Res.">
        <title>The status, quality, and expansion of the NIH full-length cDNA project: the Mammalian Gene Collection (MGC).</title>
        <authorList>
            <consortium name="The MGC Project Team"/>
        </authorList>
    </citation>
    <scope>NUCLEOTIDE SEQUENCE [LARGE SCALE MRNA] (ISOFORMS 1 AND 2)</scope>
    <source>
        <tissue>Muscle</tissue>
    </source>
</reference>
<keyword id="KW-0025">Alternative splicing</keyword>
<keyword id="KW-0217">Developmental protein</keyword>
<keyword id="KW-1015">Disulfide bond</keyword>
<keyword id="KW-0325">Glycoprotein</keyword>
<keyword id="KW-0424">Laminin EGF-like domain</keyword>
<keyword id="KW-0524">Neurogenesis</keyword>
<keyword id="KW-1267">Proteomics identification</keyword>
<keyword id="KW-1185">Reference proteome</keyword>
<keyword id="KW-0677">Repeat</keyword>
<keyword id="KW-0964">Secreted</keyword>
<keyword id="KW-0732">Signal</keyword>
<comment type="function">
    <text evidence="2">Plays a role in neurogenesis. Prevents motor neuron cell body migration out of the neural tube.</text>
</comment>
<comment type="subcellular location">
    <subcellularLocation>
        <location evidence="3">Secreted</location>
    </subcellularLocation>
</comment>
<comment type="alternative products">
    <event type="alternative splicing"/>
    <isoform>
        <id>Q8WTR8-1</id>
        <name>1</name>
        <sequence type="displayed"/>
    </isoform>
    <isoform>
        <id>Q8WTR8-2</id>
        <name>2</name>
        <sequence type="described" ref="VSP_031667 VSP_031668"/>
    </isoform>
</comment>
<sequence length="489" mass="53174">MPVTFALLLLLGQATADPCYDPQGRPQFCLPPVTQLAAVAASCPQACALSPGNHLGARETCNGSLTLALGGPFLLTSVSLRFCTPGPPALILSAAWASGGPWRLLWHRPAWPGALGGPERVTFHSTPGPKATVAASHLRVEFGGQAGLAAAGLRGRCQCHGHAARCAARARPPRCHCRHHTTGPGCESCRPSHRDWPWRPATPRHPHPCLPCSCNQHARRCRFNSELFRLSGGRSGGVCERCRHHTAGRHCHYCQPGFWRDPSQPIFSRRACRACQCHPIGATGGTCNQTSGQCTCKLGVTGLTCNRCGPGYQQSRSPRMPCQRIPEATTTLATTPGAYSSDPQCQNYCNMSDTRVHMSLRRYCQQDHVLRAQVLASEAAGPAWQRLAVRVLAVYKQRAQPVRRGDQDAWVPRADLTCGCLRLQPGTDYLLLGSAVGDPDPTRLILDRHGLALPWRPRWARPLKRLQQEERAGGCRGVRAPTPSPRPEH</sequence>